<comment type="function">
    <text>Isotocin causes contraction of smooth muscles.</text>
</comment>
<comment type="subcellular location">
    <subcellularLocation>
        <location>Secreted</location>
    </subcellularLocation>
</comment>
<comment type="PTM">
    <text evidence="1">Seven disulfide bonds are present in neurophysin.</text>
</comment>
<comment type="similarity">
    <text evidence="3">Belongs to the vasopressin/oxytocin family.</text>
</comment>
<sequence>MTGAAVSVCLLYALSVCSACYISNCPIGGKRSIMDAPQRKCMSCGPGEQGRCFGPSICCGKDVGCWMGSPETAHCMEENYLPTPCQVGGRPCGSDTVRCASPGVCCDSEGCSADQSCFAEEEGDNQIGQSEGSNSADVILRLLHLADHTPPHRVHQ</sequence>
<reference key="1">
    <citation type="journal article" date="1991" name="J. Comp. Physiol. B">
        <title>Cloning and sequence analyses of cDNAs encoding vasotocin and isotocin precursors of chum salmon, Oncorhynchus keta: evolutionary relationships of neurohypophysial hormone precursors.</title>
        <authorList>
            <person name="Hyodo S."/>
            <person name="Kato Y."/>
            <person name="Ono M."/>
            <person name="Urano A."/>
        </authorList>
    </citation>
    <scope>NUCLEOTIDE SEQUENCE [MRNA]</scope>
    <source>
        <strain>Tsugaruishi</strain>
        <tissue>Brain</tissue>
    </source>
</reference>
<feature type="signal peptide" evidence="1">
    <location>
        <begin position="1"/>
        <end position="19"/>
    </location>
</feature>
<feature type="peptide" id="PRO_0000020562" description="Isotocin">
    <location>
        <begin position="20"/>
        <end position="28"/>
    </location>
</feature>
<feature type="chain" id="PRO_0000020563" description="Neurophysin IT 2">
    <location>
        <begin position="32"/>
        <end position="156"/>
    </location>
</feature>
<feature type="modified residue" description="Glycine amide" evidence="1">
    <location>
        <position position="28"/>
    </location>
</feature>
<feature type="disulfide bond" evidence="2">
    <location>
        <begin position="20"/>
        <end position="25"/>
    </location>
</feature>
<feature type="disulfide bond" evidence="2">
    <location>
        <begin position="41"/>
        <end position="85"/>
    </location>
</feature>
<feature type="disulfide bond" evidence="2">
    <location>
        <begin position="44"/>
        <end position="58"/>
    </location>
</feature>
<feature type="disulfide bond" evidence="2">
    <location>
        <begin position="52"/>
        <end position="75"/>
    </location>
</feature>
<feature type="disulfide bond" evidence="2">
    <location>
        <begin position="59"/>
        <end position="65"/>
    </location>
</feature>
<feature type="disulfide bond" evidence="2">
    <location>
        <begin position="92"/>
        <end position="105"/>
    </location>
</feature>
<feature type="disulfide bond" evidence="2">
    <location>
        <begin position="99"/>
        <end position="117"/>
    </location>
</feature>
<feature type="disulfide bond" evidence="2">
    <location>
        <begin position="106"/>
        <end position="111"/>
    </location>
</feature>
<organism>
    <name type="scientific">Oncorhynchus keta</name>
    <name type="common">Chum salmon</name>
    <name type="synonym">Salmo keta</name>
    <dbReference type="NCBI Taxonomy" id="8018"/>
    <lineage>
        <taxon>Eukaryota</taxon>
        <taxon>Metazoa</taxon>
        <taxon>Chordata</taxon>
        <taxon>Craniata</taxon>
        <taxon>Vertebrata</taxon>
        <taxon>Euteleostomi</taxon>
        <taxon>Actinopterygii</taxon>
        <taxon>Neopterygii</taxon>
        <taxon>Teleostei</taxon>
        <taxon>Protacanthopterygii</taxon>
        <taxon>Salmoniformes</taxon>
        <taxon>Salmonidae</taxon>
        <taxon>Salmoninae</taxon>
        <taxon>Oncorhynchus</taxon>
    </lineage>
</organism>
<accession>Q91167</accession>
<keyword id="KW-0027">Amidation</keyword>
<keyword id="KW-0165">Cleavage on pair of basic residues</keyword>
<keyword id="KW-1015">Disulfide bond</keyword>
<keyword id="KW-0372">Hormone</keyword>
<keyword id="KW-0964">Secreted</keyword>
<keyword id="KW-0732">Signal</keyword>
<proteinExistence type="evidence at transcript level"/>
<evidence type="ECO:0000250" key="1"/>
<evidence type="ECO:0000250" key="2">
    <source>
        <dbReference type="UniProtKB" id="P01175"/>
    </source>
</evidence>
<evidence type="ECO:0000305" key="3"/>
<protein>
    <recommendedName>
        <fullName>Isotocin-neurophysin IT 2</fullName>
    </recommendedName>
    <component>
        <recommendedName>
            <fullName>Isotocin</fullName>
            <shortName>IT</shortName>
        </recommendedName>
    </component>
    <component>
        <recommendedName>
            <fullName>Neurophysin IT 2</fullName>
        </recommendedName>
    </component>
</protein>
<name>NEU2_ONCKE</name>
<dbReference type="EMBL" id="D10941">
    <property type="protein sequence ID" value="BAA01735.1"/>
    <property type="molecule type" value="mRNA"/>
</dbReference>
<dbReference type="PIR" id="JC1490">
    <property type="entry name" value="JC1490"/>
</dbReference>
<dbReference type="SMR" id="Q91167"/>
<dbReference type="GO" id="GO:0005615">
    <property type="term" value="C:extracellular space"/>
    <property type="evidence" value="ECO:0007669"/>
    <property type="project" value="TreeGrafter"/>
</dbReference>
<dbReference type="GO" id="GO:0030141">
    <property type="term" value="C:secretory granule"/>
    <property type="evidence" value="ECO:0007669"/>
    <property type="project" value="TreeGrafter"/>
</dbReference>
<dbReference type="GO" id="GO:0005185">
    <property type="term" value="F:neurohypophyseal hormone activity"/>
    <property type="evidence" value="ECO:0007669"/>
    <property type="project" value="InterPro"/>
</dbReference>
<dbReference type="FunFam" id="2.60.9.10:FF:000001">
    <property type="entry name" value="oxytocin-neurophysin 1"/>
    <property type="match status" value="1"/>
</dbReference>
<dbReference type="Gene3D" id="2.60.9.10">
    <property type="entry name" value="Neurohypophysial hormone domain"/>
    <property type="match status" value="1"/>
</dbReference>
<dbReference type="InterPro" id="IPR000981">
    <property type="entry name" value="Neurhyp_horm"/>
</dbReference>
<dbReference type="InterPro" id="IPR036387">
    <property type="entry name" value="Neurhyp_horm_dom_sf"/>
</dbReference>
<dbReference type="InterPro" id="IPR022423">
    <property type="entry name" value="Neurohypophysial_hormone_CS"/>
</dbReference>
<dbReference type="PANTHER" id="PTHR11681">
    <property type="entry name" value="NEUROPHYSIN"/>
    <property type="match status" value="1"/>
</dbReference>
<dbReference type="PANTHER" id="PTHR11681:SF13">
    <property type="entry name" value="VASOPRESSIN-NEUROPHYSIN 2-COPEPTIN PRECURSOR"/>
    <property type="match status" value="1"/>
</dbReference>
<dbReference type="Pfam" id="PF00184">
    <property type="entry name" value="Hormone_5"/>
    <property type="match status" value="1"/>
</dbReference>
<dbReference type="PIRSF" id="PIRSF001815">
    <property type="entry name" value="Nonapeptide_hormone_precursor"/>
    <property type="match status" value="1"/>
</dbReference>
<dbReference type="PRINTS" id="PR00831">
    <property type="entry name" value="NEUROPHYSIN"/>
</dbReference>
<dbReference type="SMART" id="SM00003">
    <property type="entry name" value="NH"/>
    <property type="match status" value="1"/>
</dbReference>
<dbReference type="SUPFAM" id="SSF49606">
    <property type="entry name" value="Neurophysin II"/>
    <property type="match status" value="1"/>
</dbReference>
<dbReference type="PROSITE" id="PS00264">
    <property type="entry name" value="NEUROHYPOPHYS_HORM"/>
    <property type="match status" value="1"/>
</dbReference>